<sequence length="73" mass="8342">MATEKSVTPTEEQLEILEYNFCKVNKHPDPTTLCLIAAETGLSEEQTLKWFKQRLAEWRKSEGLPSECGSVRD</sequence>
<accession>Q8JHU0</accession>
<organism>
    <name type="scientific">Gallus gallus</name>
    <name type="common">Chicken</name>
    <dbReference type="NCBI Taxonomy" id="9031"/>
    <lineage>
        <taxon>Eukaryota</taxon>
        <taxon>Metazoa</taxon>
        <taxon>Chordata</taxon>
        <taxon>Craniata</taxon>
        <taxon>Vertebrata</taxon>
        <taxon>Euteleostomi</taxon>
        <taxon>Archelosauria</taxon>
        <taxon>Archosauria</taxon>
        <taxon>Dinosauria</taxon>
        <taxon>Saurischia</taxon>
        <taxon>Theropoda</taxon>
        <taxon>Coelurosauria</taxon>
        <taxon>Aves</taxon>
        <taxon>Neognathae</taxon>
        <taxon>Galloanserae</taxon>
        <taxon>Galliformes</taxon>
        <taxon>Phasianidae</taxon>
        <taxon>Phasianinae</taxon>
        <taxon>Gallus</taxon>
    </lineage>
</organism>
<comment type="function">
    <text evidence="1 2">Atypical homeodomain protein which does not bind DNA and is required to modulate cardiac growth and development. May act via an interaction with SRF, leading to modulate the expression of SRF-dependent cardiac-specific genes and cardiac development. May act as a co-chaperone for HSPA1A and HSPA1B chaperone proteins and assist in chaperone-mediated protein refolding.</text>
</comment>
<comment type="subcellular location">
    <subcellularLocation>
        <location evidence="1">Nucleus</location>
    </subcellularLocation>
    <subcellularLocation>
        <location evidence="1">Cytoplasm</location>
    </subcellularLocation>
</comment>
<feature type="chain" id="PRO_0000049133" description="Homeodomain-only protein">
    <location>
        <begin position="1"/>
        <end position="73"/>
    </location>
</feature>
<feature type="DNA-binding region" description="Homeobox; degenerate" evidence="3">
    <location>
        <begin position="3"/>
        <end position="62"/>
    </location>
</feature>
<dbReference type="EMBL" id="AF492684">
    <property type="protein sequence ID" value="AAM46836.1"/>
    <property type="molecule type" value="mRNA"/>
</dbReference>
<dbReference type="RefSeq" id="NP_001384280.1">
    <property type="nucleotide sequence ID" value="NM_001397351.1"/>
</dbReference>
<dbReference type="RefSeq" id="NP_001384281.1">
    <property type="nucleotide sequence ID" value="NM_001397352.1"/>
</dbReference>
<dbReference type="RefSeq" id="NP_001384282.1">
    <property type="nucleotide sequence ID" value="NM_001397353.1"/>
</dbReference>
<dbReference type="RefSeq" id="NP_001384283.1">
    <property type="nucleotide sequence ID" value="NM_001397354.1"/>
</dbReference>
<dbReference type="RefSeq" id="NP_001384284.1">
    <property type="nucleotide sequence ID" value="NM_001397355.1"/>
</dbReference>
<dbReference type="RefSeq" id="NP_989887.1">
    <property type="nucleotide sequence ID" value="NM_204556.2"/>
</dbReference>
<dbReference type="RefSeq" id="XP_015131592.1">
    <property type="nucleotide sequence ID" value="XM_015276106.1"/>
</dbReference>
<dbReference type="RefSeq" id="XP_015131593.1">
    <property type="nucleotide sequence ID" value="XM_015276107.1"/>
</dbReference>
<dbReference type="RefSeq" id="XP_015131594.1">
    <property type="nucleotide sequence ID" value="XM_015276108.1"/>
</dbReference>
<dbReference type="RefSeq" id="XP_015131595.1">
    <property type="nucleotide sequence ID" value="XM_015276109.1"/>
</dbReference>
<dbReference type="RefSeq" id="XP_025005259.1">
    <property type="nucleotide sequence ID" value="XM_025149491.3"/>
</dbReference>
<dbReference type="RefSeq" id="XP_046771411.1">
    <property type="nucleotide sequence ID" value="XM_046915455.1"/>
</dbReference>
<dbReference type="RefSeq" id="XP_046771412.1">
    <property type="nucleotide sequence ID" value="XM_046915456.1"/>
</dbReference>
<dbReference type="RefSeq" id="XP_046795836.1">
    <property type="nucleotide sequence ID" value="XM_046939880.1"/>
</dbReference>
<dbReference type="SMR" id="Q8JHU0"/>
<dbReference type="FunCoup" id="Q8JHU0">
    <property type="interactions" value="115"/>
</dbReference>
<dbReference type="STRING" id="9031.ENSGALP00000037156"/>
<dbReference type="PaxDb" id="9031-ENSGALP00000037156"/>
<dbReference type="Ensembl" id="ENSGALT00010008655.1">
    <property type="protein sequence ID" value="ENSGALP00010005065.1"/>
    <property type="gene ID" value="ENSGALG00010003746.1"/>
</dbReference>
<dbReference type="GeneID" id="395241"/>
<dbReference type="KEGG" id="gga:395241"/>
<dbReference type="CTD" id="84525"/>
<dbReference type="VEuPathDB" id="HostDB:geneid_395241"/>
<dbReference type="eggNOG" id="KOG0490">
    <property type="taxonomic scope" value="Eukaryota"/>
</dbReference>
<dbReference type="GeneTree" id="ENSGT00390000017143"/>
<dbReference type="HOGENOM" id="CLU_193231_0_0_1"/>
<dbReference type="InParanoid" id="Q8JHU0"/>
<dbReference type="OMA" id="LRMAKWR"/>
<dbReference type="OrthoDB" id="6159439at2759"/>
<dbReference type="PhylomeDB" id="Q8JHU0"/>
<dbReference type="TreeFam" id="TF330730"/>
<dbReference type="PRO" id="PR:Q8JHU0"/>
<dbReference type="Proteomes" id="UP000000539">
    <property type="component" value="Chromosome 4"/>
</dbReference>
<dbReference type="Bgee" id="ENSGALG00000011404">
    <property type="expression patterns" value="Expressed in granulocyte and 13 other cell types or tissues"/>
</dbReference>
<dbReference type="GO" id="GO:0005737">
    <property type="term" value="C:cytoplasm"/>
    <property type="evidence" value="ECO:0007669"/>
    <property type="project" value="UniProtKB-SubCell"/>
</dbReference>
<dbReference type="GO" id="GO:0005634">
    <property type="term" value="C:nucleus"/>
    <property type="evidence" value="ECO:0000318"/>
    <property type="project" value="GO_Central"/>
</dbReference>
<dbReference type="GO" id="GO:0003677">
    <property type="term" value="F:DNA binding"/>
    <property type="evidence" value="ECO:0007669"/>
    <property type="project" value="UniProtKB-KW"/>
</dbReference>
<dbReference type="GO" id="GO:0035033">
    <property type="term" value="F:histone deacetylase regulator activity"/>
    <property type="evidence" value="ECO:0007669"/>
    <property type="project" value="Ensembl"/>
</dbReference>
<dbReference type="GO" id="GO:0030154">
    <property type="term" value="P:cell differentiation"/>
    <property type="evidence" value="ECO:0007669"/>
    <property type="project" value="InterPro"/>
</dbReference>
<dbReference type="GO" id="GO:0051131">
    <property type="term" value="P:chaperone-mediated protein complex assembly"/>
    <property type="evidence" value="ECO:0007669"/>
    <property type="project" value="Ensembl"/>
</dbReference>
<dbReference type="GO" id="GO:0007507">
    <property type="term" value="P:heart development"/>
    <property type="evidence" value="ECO:0007669"/>
    <property type="project" value="Ensembl"/>
</dbReference>
<dbReference type="GO" id="GO:0045596">
    <property type="term" value="P:negative regulation of cell differentiation"/>
    <property type="evidence" value="ECO:0007669"/>
    <property type="project" value="Ensembl"/>
</dbReference>
<dbReference type="GO" id="GO:0000122">
    <property type="term" value="P:negative regulation of transcription by RNA polymerase II"/>
    <property type="evidence" value="ECO:0007669"/>
    <property type="project" value="Ensembl"/>
</dbReference>
<dbReference type="GO" id="GO:1903598">
    <property type="term" value="P:positive regulation of gap junction assembly"/>
    <property type="evidence" value="ECO:0007669"/>
    <property type="project" value="Ensembl"/>
</dbReference>
<dbReference type="GO" id="GO:0043415">
    <property type="term" value="P:positive regulation of skeletal muscle tissue regeneration"/>
    <property type="evidence" value="ECO:0007669"/>
    <property type="project" value="Ensembl"/>
</dbReference>
<dbReference type="GO" id="GO:0051155">
    <property type="term" value="P:positive regulation of striated muscle cell differentiation"/>
    <property type="evidence" value="ECO:0007669"/>
    <property type="project" value="Ensembl"/>
</dbReference>
<dbReference type="GO" id="GO:0008016">
    <property type="term" value="P:regulation of heart contraction"/>
    <property type="evidence" value="ECO:0007669"/>
    <property type="project" value="Ensembl"/>
</dbReference>
<dbReference type="GO" id="GO:0006357">
    <property type="term" value="P:regulation of transcription by RNA polymerase II"/>
    <property type="evidence" value="ECO:0000318"/>
    <property type="project" value="GO_Central"/>
</dbReference>
<dbReference type="CDD" id="cd00086">
    <property type="entry name" value="homeodomain"/>
    <property type="match status" value="1"/>
</dbReference>
<dbReference type="FunFam" id="1.10.10.60:FF:000213">
    <property type="entry name" value="Homeodomain-only protein"/>
    <property type="match status" value="1"/>
</dbReference>
<dbReference type="Gene3D" id="1.10.10.60">
    <property type="entry name" value="Homeodomain-like"/>
    <property type="match status" value="1"/>
</dbReference>
<dbReference type="InterPro" id="IPR001356">
    <property type="entry name" value="HD"/>
</dbReference>
<dbReference type="InterPro" id="IPR009057">
    <property type="entry name" value="Homeodomain-like_sf"/>
</dbReference>
<dbReference type="InterPro" id="IPR039162">
    <property type="entry name" value="HOPX"/>
</dbReference>
<dbReference type="PANTHER" id="PTHR21408">
    <property type="entry name" value="HOMEODOMAIN-ONLY PROTEIN"/>
    <property type="match status" value="1"/>
</dbReference>
<dbReference type="PANTHER" id="PTHR21408:SF1">
    <property type="entry name" value="HOMEODOMAIN-ONLY PROTEIN"/>
    <property type="match status" value="1"/>
</dbReference>
<dbReference type="Pfam" id="PF00046">
    <property type="entry name" value="Homeodomain"/>
    <property type="match status" value="1"/>
</dbReference>
<dbReference type="SMART" id="SM00389">
    <property type="entry name" value="HOX"/>
    <property type="match status" value="1"/>
</dbReference>
<dbReference type="SUPFAM" id="SSF46689">
    <property type="entry name" value="Homeodomain-like"/>
    <property type="match status" value="1"/>
</dbReference>
<dbReference type="PROSITE" id="PS50071">
    <property type="entry name" value="HOMEOBOX_2"/>
    <property type="match status" value="1"/>
</dbReference>
<reference key="1">
    <citation type="journal article" date="2002" name="Mech. Dev.">
        <title>Expression of mOb1, a novel atypical 73 amino acid K50-homeodomain protein, during mouse development.</title>
        <authorList>
            <person name="Adu J."/>
            <person name="Leong F.T."/>
            <person name="Smith N.R."/>
            <person name="Leek J.P."/>
            <person name="Markham A.F."/>
            <person name="Robinson P.A."/>
            <person name="Mighell A.J."/>
        </authorList>
    </citation>
    <scope>NUCLEOTIDE SEQUENCE [MRNA]</scope>
</reference>
<proteinExistence type="inferred from homology"/>
<gene>
    <name type="primary">HOPX</name>
    <name type="synonym">HOD</name>
    <name type="synonym">HOP</name>
    <name type="synonym">OB1</name>
</gene>
<keyword id="KW-0963">Cytoplasm</keyword>
<keyword id="KW-0217">Developmental protein</keyword>
<keyword id="KW-0371">Homeobox</keyword>
<keyword id="KW-0539">Nucleus</keyword>
<keyword id="KW-1185">Reference proteome</keyword>
<keyword id="KW-0678">Repressor</keyword>
<keyword id="KW-0804">Transcription</keyword>
<keyword id="KW-0805">Transcription regulation</keyword>
<evidence type="ECO:0000250" key="1">
    <source>
        <dbReference type="UniProtKB" id="Q8R1H0"/>
    </source>
</evidence>
<evidence type="ECO:0000250" key="2">
    <source>
        <dbReference type="UniProtKB" id="Q9BPY8"/>
    </source>
</evidence>
<evidence type="ECO:0000255" key="3">
    <source>
        <dbReference type="PROSITE-ProRule" id="PRU00108"/>
    </source>
</evidence>
<name>HOP_CHICK</name>
<protein>
    <recommendedName>
        <fullName>Homeodomain-only protein</fullName>
    </recommendedName>
    <alternativeName>
        <fullName>Odd homeobox protein 1</fullName>
    </alternativeName>
</protein>